<comment type="function">
    <text evidence="1">This protein binds specifically to 23S rRNA; its binding is stimulated by other ribosomal proteins, e.g. L4, L17, and L20. It is important during the early stages of 50S assembly. It makes multiple contacts with different domains of the 23S rRNA in the assembled 50S subunit and ribosome (By similarity).</text>
</comment>
<comment type="function">
    <text evidence="1">The globular domain of the protein is located near the polypeptide exit tunnel on the outside of the subunit, while an extended beta-hairpin is found that lines the wall of the exit tunnel in the center of the 70S ribosome.</text>
</comment>
<comment type="subunit">
    <text evidence="1">Part of the 50S ribosomal subunit.</text>
</comment>
<comment type="similarity">
    <text evidence="1">Belongs to the universal ribosomal protein uL22 family.</text>
</comment>
<reference key="1">
    <citation type="journal article" date="1998" name="Int. J. Syst. Bacteriol.">
        <title>Classification of new phytoplasmas associated with diseases of strawberry in Florida, based on analysis of 16S rRNA and ribosomal protein gene operon sequences.</title>
        <authorList>
            <person name="Jomantiene R."/>
            <person name="Davis R.E."/>
            <person name="Maas J."/>
            <person name="Dally E.L."/>
        </authorList>
    </citation>
    <scope>NUCLEOTIDE SEQUENCE [GENOMIC DNA]</scope>
    <source>
        <strain>STRAWB2</strain>
    </source>
</reference>
<protein>
    <recommendedName>
        <fullName evidence="1">Large ribosomal subunit protein uL22</fullName>
    </recommendedName>
    <alternativeName>
        <fullName evidence="2">50S ribosomal protein L22</fullName>
    </alternativeName>
</protein>
<dbReference type="EMBL" id="U96617">
    <property type="protein sequence ID" value="AAC13666.1"/>
    <property type="molecule type" value="Genomic_DNA"/>
</dbReference>
<dbReference type="SMR" id="O66097"/>
<dbReference type="GO" id="GO:0022625">
    <property type="term" value="C:cytosolic large ribosomal subunit"/>
    <property type="evidence" value="ECO:0007669"/>
    <property type="project" value="TreeGrafter"/>
</dbReference>
<dbReference type="GO" id="GO:0019843">
    <property type="term" value="F:rRNA binding"/>
    <property type="evidence" value="ECO:0007669"/>
    <property type="project" value="UniProtKB-UniRule"/>
</dbReference>
<dbReference type="GO" id="GO:0003735">
    <property type="term" value="F:structural constituent of ribosome"/>
    <property type="evidence" value="ECO:0007669"/>
    <property type="project" value="InterPro"/>
</dbReference>
<dbReference type="GO" id="GO:0006412">
    <property type="term" value="P:translation"/>
    <property type="evidence" value="ECO:0007669"/>
    <property type="project" value="UniProtKB-UniRule"/>
</dbReference>
<dbReference type="CDD" id="cd00336">
    <property type="entry name" value="Ribosomal_L22"/>
    <property type="match status" value="1"/>
</dbReference>
<dbReference type="Gene3D" id="3.90.470.10">
    <property type="entry name" value="Ribosomal protein L22/L17"/>
    <property type="match status" value="1"/>
</dbReference>
<dbReference type="HAMAP" id="MF_01331_B">
    <property type="entry name" value="Ribosomal_uL22_B"/>
    <property type="match status" value="1"/>
</dbReference>
<dbReference type="InterPro" id="IPR001063">
    <property type="entry name" value="Ribosomal_uL22"/>
</dbReference>
<dbReference type="InterPro" id="IPR005727">
    <property type="entry name" value="Ribosomal_uL22_bac/chlpt-type"/>
</dbReference>
<dbReference type="InterPro" id="IPR047867">
    <property type="entry name" value="Ribosomal_uL22_bac/org-type"/>
</dbReference>
<dbReference type="InterPro" id="IPR018260">
    <property type="entry name" value="Ribosomal_uL22_CS"/>
</dbReference>
<dbReference type="InterPro" id="IPR036394">
    <property type="entry name" value="Ribosomal_uL22_sf"/>
</dbReference>
<dbReference type="NCBIfam" id="TIGR01044">
    <property type="entry name" value="rplV_bact"/>
    <property type="match status" value="1"/>
</dbReference>
<dbReference type="PANTHER" id="PTHR13501">
    <property type="entry name" value="CHLOROPLAST 50S RIBOSOMAL PROTEIN L22-RELATED"/>
    <property type="match status" value="1"/>
</dbReference>
<dbReference type="PANTHER" id="PTHR13501:SF8">
    <property type="entry name" value="LARGE RIBOSOMAL SUBUNIT PROTEIN UL22M"/>
    <property type="match status" value="1"/>
</dbReference>
<dbReference type="Pfam" id="PF00237">
    <property type="entry name" value="Ribosomal_L22"/>
    <property type="match status" value="1"/>
</dbReference>
<dbReference type="SUPFAM" id="SSF54843">
    <property type="entry name" value="Ribosomal protein L22"/>
    <property type="match status" value="1"/>
</dbReference>
<dbReference type="PROSITE" id="PS00464">
    <property type="entry name" value="RIBOSOMAL_L22"/>
    <property type="match status" value="1"/>
</dbReference>
<sequence length="129" mass="14269">METKNAKAIARKVSIAPRKARLVVDLIRGKNIAQAQAILTFTPKVAAPVILKLLNSAISNAVNNLKLNREQLYVKEVFVNEGLRLKRMFPRAKGSGDMIKKRTSHITLVITSSTNLQTSKEEEQSGSKN</sequence>
<feature type="chain" id="PRO_0000125198" description="Large ribosomal subunit protein uL22">
    <location>
        <begin position="1"/>
        <end position="129"/>
    </location>
</feature>
<name>RL22_PHYS2</name>
<accession>O66097</accession>
<keyword id="KW-0687">Ribonucleoprotein</keyword>
<keyword id="KW-0689">Ribosomal protein</keyword>
<keyword id="KW-0694">RNA-binding</keyword>
<keyword id="KW-0699">rRNA-binding</keyword>
<evidence type="ECO:0000255" key="1">
    <source>
        <dbReference type="HAMAP-Rule" id="MF_01331"/>
    </source>
</evidence>
<evidence type="ECO:0000305" key="2"/>
<organism>
    <name type="scientific">Phytoplasma sp. (strain STRAWB2)</name>
    <dbReference type="NCBI Taxonomy" id="59890"/>
    <lineage>
        <taxon>Bacteria</taxon>
        <taxon>Bacillati</taxon>
        <taxon>Mycoplasmatota</taxon>
        <taxon>Mollicutes</taxon>
        <taxon>Acholeplasmatales</taxon>
        <taxon>Acholeplasmataceae</taxon>
        <taxon>Candidatus Phytoplasma</taxon>
    </lineage>
</organism>
<proteinExistence type="inferred from homology"/>
<gene>
    <name evidence="1" type="primary">rplV</name>
</gene>